<dbReference type="EC" id="6.3.5.3" evidence="1"/>
<dbReference type="EMBL" id="CP000485">
    <property type="protein sequence ID" value="ABK83689.1"/>
    <property type="molecule type" value="Genomic_DNA"/>
</dbReference>
<dbReference type="RefSeq" id="WP_000055577.1">
    <property type="nucleotide sequence ID" value="NC_008600.1"/>
</dbReference>
<dbReference type="SMR" id="A0R8Z6"/>
<dbReference type="GeneID" id="45020353"/>
<dbReference type="KEGG" id="btl:BALH_0288"/>
<dbReference type="HOGENOM" id="CLU_003100_0_1_9"/>
<dbReference type="UniPathway" id="UPA00074">
    <property type="reaction ID" value="UER00128"/>
</dbReference>
<dbReference type="GO" id="GO:0005737">
    <property type="term" value="C:cytoplasm"/>
    <property type="evidence" value="ECO:0007669"/>
    <property type="project" value="UniProtKB-SubCell"/>
</dbReference>
<dbReference type="GO" id="GO:0005524">
    <property type="term" value="F:ATP binding"/>
    <property type="evidence" value="ECO:0007669"/>
    <property type="project" value="UniProtKB-UniRule"/>
</dbReference>
<dbReference type="GO" id="GO:0000287">
    <property type="term" value="F:magnesium ion binding"/>
    <property type="evidence" value="ECO:0007669"/>
    <property type="project" value="UniProtKB-UniRule"/>
</dbReference>
<dbReference type="GO" id="GO:0004642">
    <property type="term" value="F:phosphoribosylformylglycinamidine synthase activity"/>
    <property type="evidence" value="ECO:0007669"/>
    <property type="project" value="UniProtKB-UniRule"/>
</dbReference>
<dbReference type="GO" id="GO:0006189">
    <property type="term" value="P:'de novo' IMP biosynthetic process"/>
    <property type="evidence" value="ECO:0007669"/>
    <property type="project" value="UniProtKB-UniRule"/>
</dbReference>
<dbReference type="CDD" id="cd02203">
    <property type="entry name" value="PurL_repeat1"/>
    <property type="match status" value="1"/>
</dbReference>
<dbReference type="CDD" id="cd02204">
    <property type="entry name" value="PurL_repeat2"/>
    <property type="match status" value="1"/>
</dbReference>
<dbReference type="FunFam" id="3.30.1330.10:FF:000004">
    <property type="entry name" value="Phosphoribosylformylglycinamidine synthase subunit PurL"/>
    <property type="match status" value="1"/>
</dbReference>
<dbReference type="FunFam" id="3.30.1330.10:FF:000011">
    <property type="entry name" value="Phosphoribosylformylglycinamidine synthase subunit PurL"/>
    <property type="match status" value="1"/>
</dbReference>
<dbReference type="FunFam" id="3.90.650.10:FF:000009">
    <property type="entry name" value="Phosphoribosylformylglycinamidine synthase subunit PurL"/>
    <property type="match status" value="1"/>
</dbReference>
<dbReference type="FunFam" id="3.90.650.10:FF:000013">
    <property type="entry name" value="Phosphoribosylformylglycinamidine synthase subunit PurL"/>
    <property type="match status" value="1"/>
</dbReference>
<dbReference type="Gene3D" id="3.90.650.10">
    <property type="entry name" value="PurM-like C-terminal domain"/>
    <property type="match status" value="2"/>
</dbReference>
<dbReference type="Gene3D" id="3.30.1330.10">
    <property type="entry name" value="PurM-like, N-terminal domain"/>
    <property type="match status" value="2"/>
</dbReference>
<dbReference type="HAMAP" id="MF_00420">
    <property type="entry name" value="PurL_2"/>
    <property type="match status" value="1"/>
</dbReference>
<dbReference type="InterPro" id="IPR010074">
    <property type="entry name" value="PRibForGlyAmidine_synth_PurL"/>
</dbReference>
<dbReference type="InterPro" id="IPR041609">
    <property type="entry name" value="PurL_linker"/>
</dbReference>
<dbReference type="InterPro" id="IPR010918">
    <property type="entry name" value="PurM-like_C_dom"/>
</dbReference>
<dbReference type="InterPro" id="IPR036676">
    <property type="entry name" value="PurM-like_C_sf"/>
</dbReference>
<dbReference type="InterPro" id="IPR016188">
    <property type="entry name" value="PurM-like_N"/>
</dbReference>
<dbReference type="InterPro" id="IPR036921">
    <property type="entry name" value="PurM-like_N_sf"/>
</dbReference>
<dbReference type="NCBIfam" id="TIGR01736">
    <property type="entry name" value="FGAM_synth_II"/>
    <property type="match status" value="1"/>
</dbReference>
<dbReference type="NCBIfam" id="NF002290">
    <property type="entry name" value="PRK01213.1"/>
    <property type="match status" value="1"/>
</dbReference>
<dbReference type="PANTHER" id="PTHR43555">
    <property type="entry name" value="PHOSPHORIBOSYLFORMYLGLYCINAMIDINE SYNTHASE SUBUNIT PURL"/>
    <property type="match status" value="1"/>
</dbReference>
<dbReference type="PANTHER" id="PTHR43555:SF1">
    <property type="entry name" value="PHOSPHORIBOSYLFORMYLGLYCINAMIDINE SYNTHASE SUBUNIT PURL"/>
    <property type="match status" value="1"/>
</dbReference>
<dbReference type="Pfam" id="PF00586">
    <property type="entry name" value="AIRS"/>
    <property type="match status" value="2"/>
</dbReference>
<dbReference type="Pfam" id="PF02769">
    <property type="entry name" value="AIRS_C"/>
    <property type="match status" value="2"/>
</dbReference>
<dbReference type="Pfam" id="PF18072">
    <property type="entry name" value="FGAR-AT_linker"/>
    <property type="match status" value="1"/>
</dbReference>
<dbReference type="PIRSF" id="PIRSF001587">
    <property type="entry name" value="FGAM_synthase_II"/>
    <property type="match status" value="1"/>
</dbReference>
<dbReference type="SUPFAM" id="SSF56042">
    <property type="entry name" value="PurM C-terminal domain-like"/>
    <property type="match status" value="2"/>
</dbReference>
<dbReference type="SUPFAM" id="SSF55326">
    <property type="entry name" value="PurM N-terminal domain-like"/>
    <property type="match status" value="2"/>
</dbReference>
<comment type="function">
    <text evidence="1">Part of the phosphoribosylformylglycinamidine synthase complex involved in the purines biosynthetic pathway. Catalyzes the ATP-dependent conversion of formylglycinamide ribonucleotide (FGAR) and glutamine to yield formylglycinamidine ribonucleotide (FGAM) and glutamate. The FGAM synthase complex is composed of three subunits. PurQ produces an ammonia molecule by converting glutamine to glutamate. PurL transfers the ammonia molecule to FGAR to form FGAM in an ATP-dependent manner. PurS interacts with PurQ and PurL and is thought to assist in the transfer of the ammonia molecule from PurQ to PurL.</text>
</comment>
<comment type="catalytic activity">
    <reaction evidence="1">
        <text>N(2)-formyl-N(1)-(5-phospho-beta-D-ribosyl)glycinamide + L-glutamine + ATP + H2O = 2-formamido-N(1)-(5-O-phospho-beta-D-ribosyl)acetamidine + L-glutamate + ADP + phosphate + H(+)</text>
        <dbReference type="Rhea" id="RHEA:17129"/>
        <dbReference type="ChEBI" id="CHEBI:15377"/>
        <dbReference type="ChEBI" id="CHEBI:15378"/>
        <dbReference type="ChEBI" id="CHEBI:29985"/>
        <dbReference type="ChEBI" id="CHEBI:30616"/>
        <dbReference type="ChEBI" id="CHEBI:43474"/>
        <dbReference type="ChEBI" id="CHEBI:58359"/>
        <dbReference type="ChEBI" id="CHEBI:147286"/>
        <dbReference type="ChEBI" id="CHEBI:147287"/>
        <dbReference type="ChEBI" id="CHEBI:456216"/>
        <dbReference type="EC" id="6.3.5.3"/>
    </reaction>
</comment>
<comment type="pathway">
    <text evidence="1">Purine metabolism; IMP biosynthesis via de novo pathway; 5-amino-1-(5-phospho-D-ribosyl)imidazole from N(2)-formyl-N(1)-(5-phospho-D-ribosyl)glycinamide: step 1/2.</text>
</comment>
<comment type="subunit">
    <text evidence="1">Monomer. Part of the FGAM synthase complex composed of 1 PurL, 1 PurQ and 2 PurS subunits.</text>
</comment>
<comment type="subcellular location">
    <subcellularLocation>
        <location evidence="1">Cytoplasm</location>
    </subcellularLocation>
</comment>
<comment type="similarity">
    <text evidence="1">Belongs to the FGAMS family.</text>
</comment>
<protein>
    <recommendedName>
        <fullName evidence="1">Phosphoribosylformylglycinamidine synthase subunit PurL</fullName>
        <shortName evidence="1">FGAM synthase</shortName>
        <ecNumber evidence="1">6.3.5.3</ecNumber>
    </recommendedName>
    <alternativeName>
        <fullName evidence="1">Formylglycinamide ribonucleotide amidotransferase subunit II</fullName>
        <shortName evidence="1">FGAR amidotransferase II</shortName>
        <shortName evidence="1">FGAR-AT II</shortName>
    </alternativeName>
    <alternativeName>
        <fullName evidence="1">Glutamine amidotransferase PurL</fullName>
    </alternativeName>
    <alternativeName>
        <fullName evidence="1">Phosphoribosylformylglycinamidine synthase subunit II</fullName>
    </alternativeName>
</protein>
<evidence type="ECO:0000255" key="1">
    <source>
        <dbReference type="HAMAP-Rule" id="MF_00420"/>
    </source>
</evidence>
<feature type="chain" id="PRO_1000050297" description="Phosphoribosylformylglycinamidine synthase subunit PurL">
    <location>
        <begin position="1"/>
        <end position="739"/>
    </location>
</feature>
<feature type="active site" evidence="1">
    <location>
        <position position="54"/>
    </location>
</feature>
<feature type="active site" description="Proton acceptor" evidence="1">
    <location>
        <position position="100"/>
    </location>
</feature>
<feature type="binding site" evidence="1">
    <location>
        <position position="57"/>
    </location>
    <ligand>
        <name>ATP</name>
        <dbReference type="ChEBI" id="CHEBI:30616"/>
    </ligand>
</feature>
<feature type="binding site" evidence="1">
    <location>
        <position position="96"/>
    </location>
    <ligand>
        <name>ATP</name>
        <dbReference type="ChEBI" id="CHEBI:30616"/>
    </ligand>
</feature>
<feature type="binding site" evidence="1">
    <location>
        <position position="98"/>
    </location>
    <ligand>
        <name>Mg(2+)</name>
        <dbReference type="ChEBI" id="CHEBI:18420"/>
        <label>1</label>
    </ligand>
</feature>
<feature type="binding site" evidence="1">
    <location>
        <begin position="99"/>
        <end position="102"/>
    </location>
    <ligand>
        <name>substrate</name>
    </ligand>
</feature>
<feature type="binding site" evidence="1">
    <location>
        <position position="121"/>
    </location>
    <ligand>
        <name>substrate</name>
    </ligand>
</feature>
<feature type="binding site" evidence="1">
    <location>
        <position position="122"/>
    </location>
    <ligand>
        <name>Mg(2+)</name>
        <dbReference type="ChEBI" id="CHEBI:18420"/>
        <label>2</label>
    </ligand>
</feature>
<feature type="binding site" evidence="1">
    <location>
        <position position="245"/>
    </location>
    <ligand>
        <name>substrate</name>
    </ligand>
</feature>
<feature type="binding site" evidence="1">
    <location>
        <position position="273"/>
    </location>
    <ligand>
        <name>Mg(2+)</name>
        <dbReference type="ChEBI" id="CHEBI:18420"/>
        <label>2</label>
    </ligand>
</feature>
<feature type="binding site" evidence="1">
    <location>
        <begin position="317"/>
        <end position="319"/>
    </location>
    <ligand>
        <name>substrate</name>
    </ligand>
</feature>
<feature type="binding site" evidence="1">
    <location>
        <position position="500"/>
    </location>
    <ligand>
        <name>ATP</name>
        <dbReference type="ChEBI" id="CHEBI:30616"/>
    </ligand>
</feature>
<feature type="binding site" evidence="1">
    <location>
        <position position="537"/>
    </location>
    <ligand>
        <name>ATP</name>
        <dbReference type="ChEBI" id="CHEBI:30616"/>
    </ligand>
</feature>
<feature type="binding site" evidence="1">
    <location>
        <position position="538"/>
    </location>
    <ligand>
        <name>Mg(2+)</name>
        <dbReference type="ChEBI" id="CHEBI:18420"/>
        <label>1</label>
    </ligand>
</feature>
<feature type="binding site" evidence="1">
    <location>
        <position position="540"/>
    </location>
    <ligand>
        <name>substrate</name>
    </ligand>
</feature>
<accession>A0R8Z6</accession>
<gene>
    <name evidence="1" type="primary">purL</name>
    <name type="ordered locus">BALH_0288</name>
</gene>
<reference key="1">
    <citation type="journal article" date="2007" name="J. Bacteriol.">
        <title>The complete genome sequence of Bacillus thuringiensis Al Hakam.</title>
        <authorList>
            <person name="Challacombe J.F."/>
            <person name="Altherr M.R."/>
            <person name="Xie G."/>
            <person name="Bhotika S.S."/>
            <person name="Brown N."/>
            <person name="Bruce D."/>
            <person name="Campbell C.S."/>
            <person name="Campbell M.L."/>
            <person name="Chen J."/>
            <person name="Chertkov O."/>
            <person name="Cleland C."/>
            <person name="Dimitrijevic M."/>
            <person name="Doggett N.A."/>
            <person name="Fawcett J.J."/>
            <person name="Glavina T."/>
            <person name="Goodwin L.A."/>
            <person name="Green L.D."/>
            <person name="Han C.S."/>
            <person name="Hill K.K."/>
            <person name="Hitchcock P."/>
            <person name="Jackson P.J."/>
            <person name="Keim P."/>
            <person name="Kewalramani A.R."/>
            <person name="Longmire J."/>
            <person name="Lucas S."/>
            <person name="Malfatti S."/>
            <person name="Martinez D."/>
            <person name="McMurry K."/>
            <person name="Meincke L.J."/>
            <person name="Misra M."/>
            <person name="Moseman B.L."/>
            <person name="Mundt M."/>
            <person name="Munk A.C."/>
            <person name="Okinaka R.T."/>
            <person name="Parson-Quintana B."/>
            <person name="Reilly L.P."/>
            <person name="Richardson P."/>
            <person name="Robinson D.L."/>
            <person name="Saunders E."/>
            <person name="Tapia R."/>
            <person name="Tesmer J.G."/>
            <person name="Thayer N."/>
            <person name="Thompson L.S."/>
            <person name="Tice H."/>
            <person name="Ticknor L.O."/>
            <person name="Wills P.L."/>
            <person name="Gilna P."/>
            <person name="Brettin T.S."/>
        </authorList>
    </citation>
    <scope>NUCLEOTIDE SEQUENCE [LARGE SCALE GENOMIC DNA]</scope>
    <source>
        <strain>Al Hakam</strain>
    </source>
</reference>
<organism>
    <name type="scientific">Bacillus thuringiensis (strain Al Hakam)</name>
    <dbReference type="NCBI Taxonomy" id="412694"/>
    <lineage>
        <taxon>Bacteria</taxon>
        <taxon>Bacillati</taxon>
        <taxon>Bacillota</taxon>
        <taxon>Bacilli</taxon>
        <taxon>Bacillales</taxon>
        <taxon>Bacillaceae</taxon>
        <taxon>Bacillus</taxon>
        <taxon>Bacillus cereus group</taxon>
    </lineage>
</organism>
<keyword id="KW-0067">ATP-binding</keyword>
<keyword id="KW-0963">Cytoplasm</keyword>
<keyword id="KW-0436">Ligase</keyword>
<keyword id="KW-0460">Magnesium</keyword>
<keyword id="KW-0479">Metal-binding</keyword>
<keyword id="KW-0547">Nucleotide-binding</keyword>
<keyword id="KW-0658">Purine biosynthesis</keyword>
<proteinExistence type="inferred from homology"/>
<name>PURL_BACAH</name>
<sequence length="739" mass="80175">MSLMLEPNPTQIKEERIYAEMGLTDEEFAMVEKILGRLPNYTETGLFSVMWSEHCSYKNSKPVLRKFPTTGERVLQGPGEGAGIVDIGDNQAVVFKMESHNHPSAIEPYQGAATGVGGIIRDVFSMGARPVALLNSLRFGELQSPRVKYLFEEVVAGIAGYGNCIGIPTVGGEVQFDPCYEGNPLVNAMCVGLINHEDIKKGQAHGAGNTVMYVGASTGRDGIHGATFASEELSESSEAKRPAVQVGDPFMEKLLIEACLELIQSDALVGIQDMGAAGLTSSSAEMASKAGMGIEMYLDDVPQRETGMTPYEMMLSESQERMLIVVKKGREQEIVDLFEKYGLAAVTMGKVTEDKMLRLFHKGEMVAEVPADALAEEAPIYHKPSKEAAYFAEFQQMKMETPKVENYKETLFALLQQPTIASKEWVYDQYDYQVRTSTVVTPGSDAAVVRVRGTEKGLAMTTDCNSRYIYLDPEVGGKIAVAEAARNIVCSGGEPLAITDCLNFGNPEKPEIFWQIEKSVDGMSEACRTLQTPVIGGNVSMYNERSGEAVYPTPTVGMVGLVHDLKHVTTQEFKQAGDLVYVIGETKAEFGGSELQKMLHGKIFGQSPSIDLDVELKRQKQVLAAIQAGLVQSAHDVAEGGLAVAISESAIGANGLGATVKLDGEATAALFAESQSRFVITVKRENKEAFEKAVEAIQVGEVTNTNEVTIHNEENEVLLTANVDEMRKAWKGAIPCLLK</sequence>